<accession>Q10176</accession>
<feature type="signal peptide" evidence="3">
    <location>
        <begin position="1"/>
        <end position="18"/>
    </location>
</feature>
<feature type="chain" id="PRO_0000021959" description="Dolichyl-diphosphooligosaccharide--protein glycosyltransferase subunit 1">
    <location>
        <begin position="19"/>
        <end position="450"/>
    </location>
</feature>
<feature type="topological domain" description="Lumenal" evidence="3">
    <location>
        <begin position="19"/>
        <end position="424"/>
    </location>
</feature>
<feature type="transmembrane region" description="Helical" evidence="3">
    <location>
        <begin position="425"/>
        <end position="444"/>
    </location>
</feature>
<feature type="topological domain" description="Cytoplasmic" evidence="3">
    <location>
        <begin position="445"/>
        <end position="450"/>
    </location>
</feature>
<feature type="glycosylation site" description="N-linked (GlcNAc...) asparagine" evidence="3">
    <location>
        <position position="290"/>
    </location>
</feature>
<feature type="glycosylation site" description="N-linked (GlcNAc...) asparagine" evidence="3">
    <location>
        <position position="383"/>
    </location>
</feature>
<feature type="glycosylation site" description="N-linked (GlcNAc...) asparagine" evidence="3">
    <location>
        <position position="405"/>
    </location>
</feature>
<feature type="glycosylation site" description="N-linked (GlcNAc...) asparagine" evidence="3">
    <location>
        <position position="422"/>
    </location>
</feature>
<comment type="function">
    <text evidence="2">Subunit of the oligosaccharyl transferase (OST) complex that catalyzes the initial transfer of a defined glycan (Glc(3)Man(9)GlcNAc(2) in eukaryotes) from the lipid carrier dolichol-pyrophosphate to an asparagine residue within an Asn-X-Ser/Thr consensus motif in nascent polypeptide chains, the first step in protein N-glycosylation. N-glycosylation occurs cotranslationally and the complex associates with the Sec61 complex at the channel-forming translocon complex that mediates protein translocation across the endoplasmic reticulum (ER). All subunits are required for a maximal enzyme activity.</text>
</comment>
<comment type="pathway">
    <text>Protein modification; protein glycosylation.</text>
</comment>
<comment type="subunit">
    <text evidence="2">Component of the oligosaccharyltransferase (OST) complex.</text>
</comment>
<comment type="subcellular location">
    <subcellularLocation>
        <location evidence="1">Endoplasmic reticulum membrane</location>
        <topology evidence="1">Single-pass type I membrane protein</topology>
    </subcellularLocation>
</comment>
<comment type="similarity">
    <text evidence="4">Belongs to the OST1 family.</text>
</comment>
<dbReference type="EMBL" id="CU329670">
    <property type="protein sequence ID" value="CAA93296.1"/>
    <property type="molecule type" value="Genomic_DNA"/>
</dbReference>
<dbReference type="PIR" id="T38465">
    <property type="entry name" value="T38465"/>
</dbReference>
<dbReference type="RefSeq" id="NP_594536.1">
    <property type="nucleotide sequence ID" value="NM_001019965.2"/>
</dbReference>
<dbReference type="SMR" id="Q10176"/>
<dbReference type="BioGRID" id="278132">
    <property type="interactions" value="3"/>
</dbReference>
<dbReference type="ComplexPortal" id="CPX-10061">
    <property type="entry name" value="Oligosaccharyltransferase complex"/>
</dbReference>
<dbReference type="FunCoup" id="Q10176">
    <property type="interactions" value="722"/>
</dbReference>
<dbReference type="STRING" id="284812.Q10176"/>
<dbReference type="GlyCosmos" id="Q10176">
    <property type="glycosylation" value="4 sites, No reported glycans"/>
</dbReference>
<dbReference type="iPTMnet" id="Q10176"/>
<dbReference type="PaxDb" id="4896-SPAC27F1.07.1"/>
<dbReference type="EnsemblFungi" id="SPAC27F1.07.1">
    <property type="protein sequence ID" value="SPAC27F1.07.1:pep"/>
    <property type="gene ID" value="SPAC27F1.07"/>
</dbReference>
<dbReference type="GeneID" id="2541636"/>
<dbReference type="KEGG" id="spo:2541636"/>
<dbReference type="PomBase" id="SPAC27F1.07">
    <property type="gene designation" value="ost1"/>
</dbReference>
<dbReference type="VEuPathDB" id="FungiDB:SPAC27F1.07"/>
<dbReference type="eggNOG" id="KOG2291">
    <property type="taxonomic scope" value="Eukaryota"/>
</dbReference>
<dbReference type="HOGENOM" id="CLU_031381_1_0_1"/>
<dbReference type="InParanoid" id="Q10176"/>
<dbReference type="OMA" id="RYEYARE"/>
<dbReference type="PhylomeDB" id="Q10176"/>
<dbReference type="UniPathway" id="UPA00378"/>
<dbReference type="PRO" id="PR:Q10176"/>
<dbReference type="Proteomes" id="UP000002485">
    <property type="component" value="Chromosome I"/>
</dbReference>
<dbReference type="GO" id="GO:0032541">
    <property type="term" value="C:cortical endoplasmic reticulum"/>
    <property type="evidence" value="ECO:0000314"/>
    <property type="project" value="PomBase"/>
</dbReference>
<dbReference type="GO" id="GO:0005783">
    <property type="term" value="C:endoplasmic reticulum"/>
    <property type="evidence" value="ECO:0007005"/>
    <property type="project" value="PomBase"/>
</dbReference>
<dbReference type="GO" id="GO:0042175">
    <property type="term" value="C:nuclear outer membrane-endoplasmic reticulum membrane network"/>
    <property type="evidence" value="ECO:0000314"/>
    <property type="project" value="PomBase"/>
</dbReference>
<dbReference type="GO" id="GO:0008250">
    <property type="term" value="C:oligosaccharyltransferase complex"/>
    <property type="evidence" value="ECO:0000318"/>
    <property type="project" value="GO_Central"/>
</dbReference>
<dbReference type="GO" id="GO:0018279">
    <property type="term" value="P:protein N-linked glycosylation via asparagine"/>
    <property type="evidence" value="ECO:0000318"/>
    <property type="project" value="GO_Central"/>
</dbReference>
<dbReference type="InterPro" id="IPR007676">
    <property type="entry name" value="Ribophorin_I"/>
</dbReference>
<dbReference type="PANTHER" id="PTHR21049:SF0">
    <property type="entry name" value="DOLICHYL-DIPHOSPHOOLIGOSACCHARIDE--PROTEIN GLYCOSYLTRANSFERASE SUBUNIT 1"/>
    <property type="match status" value="1"/>
</dbReference>
<dbReference type="PANTHER" id="PTHR21049">
    <property type="entry name" value="RIBOPHORIN I"/>
    <property type="match status" value="1"/>
</dbReference>
<dbReference type="Pfam" id="PF04597">
    <property type="entry name" value="Ribophorin_I"/>
    <property type="match status" value="1"/>
</dbReference>
<gene>
    <name type="primary">ost1</name>
    <name type="ORF">SPAC27F1.07</name>
</gene>
<name>OST1_SCHPO</name>
<reference key="1">
    <citation type="journal article" date="2002" name="Nature">
        <title>The genome sequence of Schizosaccharomyces pombe.</title>
        <authorList>
            <person name="Wood V."/>
            <person name="Gwilliam R."/>
            <person name="Rajandream M.A."/>
            <person name="Lyne M.H."/>
            <person name="Lyne R."/>
            <person name="Stewart A."/>
            <person name="Sgouros J.G."/>
            <person name="Peat N."/>
            <person name="Hayles J."/>
            <person name="Baker S.G."/>
            <person name="Basham D."/>
            <person name="Bowman S."/>
            <person name="Brooks K."/>
            <person name="Brown D."/>
            <person name="Brown S."/>
            <person name="Chillingworth T."/>
            <person name="Churcher C.M."/>
            <person name="Collins M."/>
            <person name="Connor R."/>
            <person name="Cronin A."/>
            <person name="Davis P."/>
            <person name="Feltwell T."/>
            <person name="Fraser A."/>
            <person name="Gentles S."/>
            <person name="Goble A."/>
            <person name="Hamlin N."/>
            <person name="Harris D.E."/>
            <person name="Hidalgo J."/>
            <person name="Hodgson G."/>
            <person name="Holroyd S."/>
            <person name="Hornsby T."/>
            <person name="Howarth S."/>
            <person name="Huckle E.J."/>
            <person name="Hunt S."/>
            <person name="Jagels K."/>
            <person name="James K.D."/>
            <person name="Jones L."/>
            <person name="Jones M."/>
            <person name="Leather S."/>
            <person name="McDonald S."/>
            <person name="McLean J."/>
            <person name="Mooney P."/>
            <person name="Moule S."/>
            <person name="Mungall K.L."/>
            <person name="Murphy L.D."/>
            <person name="Niblett D."/>
            <person name="Odell C."/>
            <person name="Oliver K."/>
            <person name="O'Neil S."/>
            <person name="Pearson D."/>
            <person name="Quail M.A."/>
            <person name="Rabbinowitsch E."/>
            <person name="Rutherford K.M."/>
            <person name="Rutter S."/>
            <person name="Saunders D."/>
            <person name="Seeger K."/>
            <person name="Sharp S."/>
            <person name="Skelton J."/>
            <person name="Simmonds M.N."/>
            <person name="Squares R."/>
            <person name="Squares S."/>
            <person name="Stevens K."/>
            <person name="Taylor K."/>
            <person name="Taylor R.G."/>
            <person name="Tivey A."/>
            <person name="Walsh S.V."/>
            <person name="Warren T."/>
            <person name="Whitehead S."/>
            <person name="Woodward J.R."/>
            <person name="Volckaert G."/>
            <person name="Aert R."/>
            <person name="Robben J."/>
            <person name="Grymonprez B."/>
            <person name="Weltjens I."/>
            <person name="Vanstreels E."/>
            <person name="Rieger M."/>
            <person name="Schaefer M."/>
            <person name="Mueller-Auer S."/>
            <person name="Gabel C."/>
            <person name="Fuchs M."/>
            <person name="Duesterhoeft A."/>
            <person name="Fritzc C."/>
            <person name="Holzer E."/>
            <person name="Moestl D."/>
            <person name="Hilbert H."/>
            <person name="Borzym K."/>
            <person name="Langer I."/>
            <person name="Beck A."/>
            <person name="Lehrach H."/>
            <person name="Reinhardt R."/>
            <person name="Pohl T.M."/>
            <person name="Eger P."/>
            <person name="Zimmermann W."/>
            <person name="Wedler H."/>
            <person name="Wambutt R."/>
            <person name="Purnelle B."/>
            <person name="Goffeau A."/>
            <person name="Cadieu E."/>
            <person name="Dreano S."/>
            <person name="Gloux S."/>
            <person name="Lelaure V."/>
            <person name="Mottier S."/>
            <person name="Galibert F."/>
            <person name="Aves S.J."/>
            <person name="Xiang Z."/>
            <person name="Hunt C."/>
            <person name="Moore K."/>
            <person name="Hurst S.M."/>
            <person name="Lucas M."/>
            <person name="Rochet M."/>
            <person name="Gaillardin C."/>
            <person name="Tallada V.A."/>
            <person name="Garzon A."/>
            <person name="Thode G."/>
            <person name="Daga R.R."/>
            <person name="Cruzado L."/>
            <person name="Jimenez J."/>
            <person name="Sanchez M."/>
            <person name="del Rey F."/>
            <person name="Benito J."/>
            <person name="Dominguez A."/>
            <person name="Revuelta J.L."/>
            <person name="Moreno S."/>
            <person name="Armstrong J."/>
            <person name="Forsburg S.L."/>
            <person name="Cerutti L."/>
            <person name="Lowe T."/>
            <person name="McCombie W.R."/>
            <person name="Paulsen I."/>
            <person name="Potashkin J."/>
            <person name="Shpakovski G.V."/>
            <person name="Ussery D."/>
            <person name="Barrell B.G."/>
            <person name="Nurse P."/>
        </authorList>
    </citation>
    <scope>NUCLEOTIDE SEQUENCE [LARGE SCALE GENOMIC DNA]</scope>
    <source>
        <strain>972 / ATCC 24843</strain>
    </source>
</reference>
<proteinExistence type="inferred from homology"/>
<evidence type="ECO:0000250" key="1"/>
<evidence type="ECO:0000250" key="2">
    <source>
        <dbReference type="UniProtKB" id="P41543"/>
    </source>
</evidence>
<evidence type="ECO:0000255" key="3"/>
<evidence type="ECO:0000305" key="4"/>
<keyword id="KW-0256">Endoplasmic reticulum</keyword>
<keyword id="KW-0325">Glycoprotein</keyword>
<keyword id="KW-0472">Membrane</keyword>
<keyword id="KW-1185">Reference proteome</keyword>
<keyword id="KW-0732">Signal</keyword>
<keyword id="KW-0812">Transmembrane</keyword>
<keyword id="KW-1133">Transmembrane helix</keyword>
<protein>
    <recommendedName>
        <fullName>Dolichyl-diphosphooligosaccharide--protein glycosyltransferase subunit 1</fullName>
    </recommendedName>
    <alternativeName>
        <fullName>Oligosaccharyl transferase subunit alpha</fullName>
    </alternativeName>
</protein>
<organism>
    <name type="scientific">Schizosaccharomyces pombe (strain 972 / ATCC 24843)</name>
    <name type="common">Fission yeast</name>
    <dbReference type="NCBI Taxonomy" id="284812"/>
    <lineage>
        <taxon>Eukaryota</taxon>
        <taxon>Fungi</taxon>
        <taxon>Dikarya</taxon>
        <taxon>Ascomycota</taxon>
        <taxon>Taphrinomycotina</taxon>
        <taxon>Schizosaccharomycetes</taxon>
        <taxon>Schizosaccharomycetales</taxon>
        <taxon>Schizosaccharomycetaceae</taxon>
        <taxon>Schizosaccharomyces</taxon>
    </lineage>
</organism>
<sequence>MLVLKLLLWSIISGLSLAEQVWRNSNAIRTIDLRSTYTKTLTSLIIVNEGDEPQNTYRYFQQTSPGESVLSLSVSIKEEEKKGTNPIKVNNNVYDIPLQPPVKPGESRTLLIQAGLDGGVRPLPAAVDQDEEQYLVYLTTLYLDSPYTTDLQRTRLILPSAKIDTYTTYNIDGAELPNRVGNTLVYESRETITGEDNDLGEIYVRYEHTVPIPRGADLYVQIDMHEYRKMLEVSERVVFENHAAKLKSNFDRAKWYMGNFYNPVSTAINRVVYSLPRNSKDVYYTDEVGNITTSHMRVEPHQTWIELNPRYPVFGGWNYLFQLDWKMPYEEFRSSKNRREYLDIPLAWSPGDMIYEKAVWSYVFPEGATNIEIEMPVEISNSNVTKIHKFLDTLGRQVFTYEALNVTDGVPSDIVHISYEYNSSAFFLRIAIITTLLILLAAAAYMIWAP</sequence>